<dbReference type="EMBL" id="AY589637">
    <property type="protein sequence ID" value="AAT72444.1"/>
    <property type="molecule type" value="Genomic_DNA"/>
</dbReference>
<dbReference type="EMBL" id="AY589607">
    <property type="protein sequence ID" value="AAT72415.1"/>
    <property type="molecule type" value="mRNA"/>
</dbReference>
<dbReference type="RefSeq" id="XP_003111092.1">
    <property type="nucleotide sequence ID" value="XM_003111044.1"/>
</dbReference>
<dbReference type="SMR" id="Q6E3D4"/>
<dbReference type="EnsemblMetazoa" id="CRE03781.1">
    <property type="protein sequence ID" value="CRE03781.1"/>
    <property type="gene ID" value="WBGene00066597"/>
</dbReference>
<dbReference type="eggNOG" id="KOG0129">
    <property type="taxonomic scope" value="Eukaryota"/>
</dbReference>
<dbReference type="HOGENOM" id="CLU_377774_0_0_1"/>
<dbReference type="OMA" id="MFCEDES"/>
<dbReference type="OrthoDB" id="10033548at2759"/>
<dbReference type="GO" id="GO:0005737">
    <property type="term" value="C:cytoplasm"/>
    <property type="evidence" value="ECO:0007669"/>
    <property type="project" value="TreeGrafter"/>
</dbReference>
<dbReference type="GO" id="GO:0043005">
    <property type="term" value="C:neuron projection"/>
    <property type="evidence" value="ECO:0007669"/>
    <property type="project" value="TreeGrafter"/>
</dbReference>
<dbReference type="GO" id="GO:0005634">
    <property type="term" value="C:nucleus"/>
    <property type="evidence" value="ECO:0007669"/>
    <property type="project" value="TreeGrafter"/>
</dbReference>
<dbReference type="GO" id="GO:0045202">
    <property type="term" value="C:synapse"/>
    <property type="evidence" value="ECO:0007669"/>
    <property type="project" value="TreeGrafter"/>
</dbReference>
<dbReference type="GO" id="GO:0003730">
    <property type="term" value="F:mRNA 3'-UTR binding"/>
    <property type="evidence" value="ECO:0007669"/>
    <property type="project" value="InterPro"/>
</dbReference>
<dbReference type="GO" id="GO:0000900">
    <property type="term" value="F:mRNA regulatory element binding translation repressor activity"/>
    <property type="evidence" value="ECO:0007669"/>
    <property type="project" value="TreeGrafter"/>
</dbReference>
<dbReference type="GO" id="GO:0043022">
    <property type="term" value="F:ribosome binding"/>
    <property type="evidence" value="ECO:0007669"/>
    <property type="project" value="TreeGrafter"/>
</dbReference>
<dbReference type="GO" id="GO:0008135">
    <property type="term" value="F:translation factor activity, RNA binding"/>
    <property type="evidence" value="ECO:0007669"/>
    <property type="project" value="TreeGrafter"/>
</dbReference>
<dbReference type="GO" id="GO:2000766">
    <property type="term" value="P:negative regulation of cytoplasmic translation"/>
    <property type="evidence" value="ECO:0007669"/>
    <property type="project" value="TreeGrafter"/>
</dbReference>
<dbReference type="CDD" id="cd19757">
    <property type="entry name" value="Bbox1"/>
    <property type="match status" value="1"/>
</dbReference>
<dbReference type="CDD" id="cd12723">
    <property type="entry name" value="RRM1_CPEB1"/>
    <property type="match status" value="1"/>
</dbReference>
<dbReference type="CDD" id="cd12725">
    <property type="entry name" value="RRM2_CPEB1"/>
    <property type="match status" value="1"/>
</dbReference>
<dbReference type="FunFam" id="3.30.70.330:FF:000483">
    <property type="entry name" value="Cytoplasmic polyadenylation element-binding protein 2"/>
    <property type="match status" value="1"/>
</dbReference>
<dbReference type="FunFam" id="3.30.70.330:FF:000677">
    <property type="entry name" value="Cytoplasmic polyadenylation element-binding protein 3"/>
    <property type="match status" value="1"/>
</dbReference>
<dbReference type="Gene3D" id="3.30.70.330">
    <property type="match status" value="2"/>
</dbReference>
<dbReference type="Gene3D" id="4.10.640.40">
    <property type="entry name" value="Cytoplasmic polyadenylation element-binding protein, ZZ domain"/>
    <property type="match status" value="1"/>
</dbReference>
<dbReference type="InterPro" id="IPR032296">
    <property type="entry name" value="CEBP_ZZ"/>
</dbReference>
<dbReference type="InterPro" id="IPR038446">
    <property type="entry name" value="CEBP_ZZ_sf"/>
</dbReference>
<dbReference type="InterPro" id="IPR034819">
    <property type="entry name" value="CPEB"/>
</dbReference>
<dbReference type="InterPro" id="IPR034977">
    <property type="entry name" value="CPEB1_RRM1"/>
</dbReference>
<dbReference type="InterPro" id="IPR012677">
    <property type="entry name" value="Nucleotide-bd_a/b_plait_sf"/>
</dbReference>
<dbReference type="InterPro" id="IPR035979">
    <property type="entry name" value="RBD_domain_sf"/>
</dbReference>
<dbReference type="InterPro" id="IPR000504">
    <property type="entry name" value="RRM_dom"/>
</dbReference>
<dbReference type="PANTHER" id="PTHR12566">
    <property type="entry name" value="CYTOPLASMIC POLYADENYLATION ELEMENT BINDING PROTEIN CPEB"/>
    <property type="match status" value="1"/>
</dbReference>
<dbReference type="PANTHER" id="PTHR12566:SF9">
    <property type="entry name" value="CYTOPLASMIC POLYADENYLATION ELEMENT-BINDING PROTEIN 1"/>
    <property type="match status" value="1"/>
</dbReference>
<dbReference type="Pfam" id="PF16366">
    <property type="entry name" value="CEBP_ZZ"/>
    <property type="match status" value="1"/>
</dbReference>
<dbReference type="Pfam" id="PF16367">
    <property type="entry name" value="RRM_7"/>
    <property type="match status" value="1"/>
</dbReference>
<dbReference type="SMART" id="SM00360">
    <property type="entry name" value="RRM"/>
    <property type="match status" value="2"/>
</dbReference>
<dbReference type="SUPFAM" id="SSF54928">
    <property type="entry name" value="RNA-binding domain, RBD"/>
    <property type="match status" value="1"/>
</dbReference>
<sequence length="766" mass="85248">MSQEEVPGEIPGDIAIEKAENTVQDDVEAKNTSETKKTIPPMLNVEKVDVAAVGEKSPAPVSVYDLFKKYQKPDVKSDSEDMNIGFDQLTTDEKNGFLRKLQMLTVGNKKTLKVPGESTPSPASRLLKKFVPSRRPSTENKSCESPSRFSLFGKSNKKAPELERPMNGGQPRKKSARRLNFGKEIEERTETDFQNNRVVAAMTREYEKIVTLKGVPVPINKPPRQQGPRGSLETPTDSPAKTETSSISKSYGSDYQSSRDRYTSINEDSLTKKRISTPNRGQGLSNRDNATWHGELPPRDYTSPTFSRKIFVGGVPWDITEAALKDSFGEFGSCAVEWPGHEARYRNAQSNTASLNLRNQSKYTGQAATGYVYMIFEDERAVASLLHECSQEIGGAGEWYFKIRAQRSKSTEIRQVQIIPWVTSDSMFCEDESLLEVGIEPKRTVFVGALHGMMTAQVLHSIMEDCFGSVECVQLDTDKFKYPIGSGRVTFREHGAYFKAIEMGYLHVHTSKFRKRVQIDPFLESTNCMVCTTELAHCFCRNRNCFKYYCHTCWAVDHGHGHDGEVHVPVIVPSSASKAFSGPNRRSHLSSNSPSKPASLMSSSNSQVAHMVSPAYPVLVGAPAQNLSALYGYIQNSQQMMITPAAVYEPPMTPSPNEMKRRSFPEFQPQPTVFFNSTPMMTPQKGVPCSDGSAVPAYYANSAAFLTPPSSYYNSPSHSTSSNLSPQQPQQYYGANLYYGYMPQMSYDGGPNQSAMHLPHTPNYQQ</sequence>
<proteinExistence type="evidence at transcript level"/>
<evidence type="ECO:0000250" key="1"/>
<evidence type="ECO:0000256" key="2">
    <source>
        <dbReference type="SAM" id="MobiDB-lite"/>
    </source>
</evidence>
<organism>
    <name type="scientific">Caenorhabditis remanei</name>
    <name type="common">Caenorhabditis vulgaris</name>
    <dbReference type="NCBI Taxonomy" id="31234"/>
    <lineage>
        <taxon>Eukaryota</taxon>
        <taxon>Metazoa</taxon>
        <taxon>Ecdysozoa</taxon>
        <taxon>Nematoda</taxon>
        <taxon>Chromadorea</taxon>
        <taxon>Rhabditida</taxon>
        <taxon>Rhabditina</taxon>
        <taxon>Rhabditomorpha</taxon>
        <taxon>Rhabditoidea</taxon>
        <taxon>Rhabditidae</taxon>
        <taxon>Peloderinae</taxon>
        <taxon>Caenorhabditis</taxon>
    </lineage>
</organism>
<gene>
    <name type="primary">cpb-3</name>
</gene>
<keyword id="KW-0694">RNA-binding</keyword>
<accession>Q6E3D4</accession>
<comment type="function">
    <text evidence="1">Cytoplasmic polyadenylation element binding protein that binds to and regulates the translation of specific mRNAs.</text>
</comment>
<feature type="chain" id="PRO_0000081519" description="Cytoplasmic polyadenylation element-binding protein 3">
    <location>
        <begin position="1"/>
        <end position="766"/>
    </location>
</feature>
<feature type="domain" description="RRM">
    <location>
        <begin position="310"/>
        <end position="332"/>
    </location>
</feature>
<feature type="region of interest" description="Disordered" evidence="2">
    <location>
        <begin position="1"/>
        <end position="35"/>
    </location>
</feature>
<feature type="region of interest" description="Disordered" evidence="2">
    <location>
        <begin position="131"/>
        <end position="179"/>
    </location>
</feature>
<feature type="region of interest" description="Disordered" evidence="2">
    <location>
        <begin position="216"/>
        <end position="299"/>
    </location>
</feature>
<feature type="region of interest" description="Disordered" evidence="2">
    <location>
        <begin position="578"/>
        <end position="602"/>
    </location>
</feature>
<feature type="compositionally biased region" description="Polar residues" evidence="2">
    <location>
        <begin position="233"/>
        <end position="256"/>
    </location>
</feature>
<feature type="compositionally biased region" description="Polar residues" evidence="2">
    <location>
        <begin position="276"/>
        <end position="289"/>
    </location>
</feature>
<feature type="compositionally biased region" description="Low complexity" evidence="2">
    <location>
        <begin position="589"/>
        <end position="602"/>
    </location>
</feature>
<reference key="1">
    <citation type="journal article" date="2004" name="Genome Res.">
        <title>A phylogeny of Caenorhabditis reveals frequent loss of introns during nematode evolution.</title>
        <authorList>
            <person name="Cho S."/>
            <person name="Jin S.W."/>
            <person name="Cohen A."/>
            <person name="Ellis R.E."/>
        </authorList>
    </citation>
    <scope>NUCLEOTIDE SEQUENCE [GENOMIC DNA / MRNA]</scope>
</reference>
<protein>
    <recommendedName>
        <fullName>Cytoplasmic polyadenylation element-binding protein 3</fullName>
    </recommendedName>
</protein>
<name>CPB3_CAERE</name>